<reference key="1">
    <citation type="journal article" date="2006" name="Diabetes">
        <title>Blockers of the delayed-rectifier potassium current in pancreatic beta-cells enhance glucose-dependent insulin secretion.</title>
        <authorList>
            <person name="Herrington J."/>
            <person name="Zhou Y.-P."/>
            <person name="Bugianesi R.M."/>
            <person name="Dulski P.M."/>
            <person name="Feng Y."/>
            <person name="Warren V.A."/>
            <person name="Smith M.M."/>
            <person name="Kohler M.G."/>
            <person name="Garsky V.M."/>
            <person name="Sanchez M."/>
            <person name="Wagner M."/>
            <person name="Raphaelli K."/>
            <person name="Banerjee P."/>
            <person name="Ahaghotu C."/>
            <person name="Wunderler D."/>
            <person name="Priest B.T."/>
            <person name="Mehl J.T."/>
            <person name="Garcia M.L."/>
            <person name="McManus O.B."/>
            <person name="Kaczorowski G.J."/>
            <person name="Slaughter R.S."/>
        </authorList>
    </citation>
    <scope>PROTEIN SEQUENCE</scope>
    <scope>SUBCELLULAR LOCATION</scope>
    <scope>TISSUE SPECIFICITY</scope>
    <scope>MASS SPECTROMETRY</scope>
    <source>
        <tissue>Venom</tissue>
    </source>
</reference>
<reference key="2">
    <citation type="journal article" date="2006" name="Diabetes">
        <authorList>
            <person name="Herrington J."/>
            <person name="Zhou Y.-P."/>
            <person name="Bugianesi R.M."/>
            <person name="Dulski P.M."/>
            <person name="Feng Y."/>
            <person name="Warren V.A."/>
            <person name="Smith M.M."/>
            <person name="Kohler M.G."/>
            <person name="Garsky V.M."/>
            <person name="Sanchez M."/>
            <person name="Wagner M."/>
            <person name="Raphaelli K."/>
            <person name="Banerjee P."/>
            <person name="Ahaghotu C."/>
            <person name="Wunderler D."/>
            <person name="Priest B.T."/>
            <person name="Mehl J.T."/>
            <person name="Garcia M.L."/>
            <person name="McManus O.B."/>
            <person name="Kaczorowski G.J."/>
            <person name="Slaughter R.S."/>
        </authorList>
    </citation>
    <scope>ERRATUM OF PUBMED:16567526</scope>
</reference>
<feature type="peptide" id="PRO_0000233917" description="Kappa-theraphotoxin-Pg1b" evidence="3">
    <location>
        <begin position="1"/>
        <end position="36"/>
    </location>
</feature>
<feature type="disulfide bond" evidence="2">
    <location>
        <begin position="4"/>
        <end position="19"/>
    </location>
</feature>
<feature type="disulfide bond" evidence="2">
    <location>
        <begin position="11"/>
        <end position="24"/>
    </location>
</feature>
<feature type="disulfide bond" evidence="2">
    <location>
        <begin position="18"/>
        <end position="31"/>
    </location>
</feature>
<organism>
    <name type="scientific">Chilobrachys guangxiensis</name>
    <name type="common">Chinese earth tiger tarantula</name>
    <name type="synonym">Chilobrachys jingzhao</name>
    <dbReference type="NCBI Taxonomy" id="278060"/>
    <lineage>
        <taxon>Eukaryota</taxon>
        <taxon>Metazoa</taxon>
        <taxon>Ecdysozoa</taxon>
        <taxon>Arthropoda</taxon>
        <taxon>Chelicerata</taxon>
        <taxon>Arachnida</taxon>
        <taxon>Araneae</taxon>
        <taxon>Mygalomorphae</taxon>
        <taxon>Theraphosidae</taxon>
        <taxon>Chilobrachys</taxon>
    </lineage>
</organism>
<protein>
    <recommendedName>
        <fullName>Kappa-theraphotoxin-Pg1b</fullName>
        <shortName>Kappa-TRTX-Pg1b</shortName>
    </recommendedName>
    <alternativeName>
        <fullName>Guangxitoxin-1D</fullName>
        <shortName>GxTX-1D</shortName>
    </alternativeName>
</protein>
<name>TXG1D_CHIGU</name>
<sequence length="36" mass="3941">DGECGGFWWKCGSGKPACCPKYVCSPKWGLCNFPMP</sequence>
<keyword id="KW-0903">Direct protein sequencing</keyword>
<keyword id="KW-1015">Disulfide bond</keyword>
<keyword id="KW-0872">Ion channel impairing toxin</keyword>
<keyword id="KW-0960">Knottin</keyword>
<keyword id="KW-0632">Potassium channel impairing toxin</keyword>
<keyword id="KW-0964">Secreted</keyword>
<keyword id="KW-0800">Toxin</keyword>
<keyword id="KW-1220">Voltage-gated potassium channel impairing toxin</keyword>
<proteinExistence type="evidence at protein level"/>
<dbReference type="BMRB" id="P84836"/>
<dbReference type="SMR" id="P84836"/>
<dbReference type="ArachnoServer" id="AS000322">
    <property type="toxin name" value="kappa-theraphotoxin-Pg1b"/>
</dbReference>
<dbReference type="GO" id="GO:0005576">
    <property type="term" value="C:extracellular region"/>
    <property type="evidence" value="ECO:0007669"/>
    <property type="project" value="UniProtKB-SubCell"/>
</dbReference>
<dbReference type="GO" id="GO:0008200">
    <property type="term" value="F:ion channel inhibitor activity"/>
    <property type="evidence" value="ECO:0007669"/>
    <property type="project" value="InterPro"/>
</dbReference>
<dbReference type="GO" id="GO:0015459">
    <property type="term" value="F:potassium channel regulator activity"/>
    <property type="evidence" value="ECO:0007669"/>
    <property type="project" value="UniProtKB-KW"/>
</dbReference>
<dbReference type="GO" id="GO:0090729">
    <property type="term" value="F:toxin activity"/>
    <property type="evidence" value="ECO:0007669"/>
    <property type="project" value="UniProtKB-KW"/>
</dbReference>
<dbReference type="InterPro" id="IPR011696">
    <property type="entry name" value="Huwentoxin-1"/>
</dbReference>
<dbReference type="Pfam" id="PF07740">
    <property type="entry name" value="Toxin_12"/>
    <property type="match status" value="1"/>
</dbReference>
<dbReference type="SUPFAM" id="SSF57059">
    <property type="entry name" value="omega toxin-like"/>
    <property type="match status" value="1"/>
</dbReference>
<accession>P84836</accession>
<evidence type="ECO:0000250" key="1"/>
<evidence type="ECO:0000250" key="2">
    <source>
        <dbReference type="UniProtKB" id="P62520"/>
    </source>
</evidence>
<evidence type="ECO:0000269" key="3">
    <source>
    </source>
</evidence>
<evidence type="ECO:0000305" key="4"/>
<comment type="function">
    <text evidence="1">Gating modifier of Kv2.1/KCNB1, Kv2.2/KCNB2 and Kv4.3/KCND3 channels.</text>
</comment>
<comment type="subcellular location">
    <subcellularLocation>
        <location evidence="3">Secreted</location>
    </subcellularLocation>
</comment>
<comment type="tissue specificity">
    <text evidence="3">Expressed by the venom gland.</text>
</comment>
<comment type="domain">
    <text evidence="1">The presence of a 'disulfide through disulfide knot' structurally defines this protein as a knottin.</text>
</comment>
<comment type="mass spectrometry" mass="3934.0" error="0.39" method="MALDI" evidence="3"/>
<comment type="miscellaneous">
    <text evidence="1">Blockers of Kv2.1/KCNB1 potassium channels may be a useful approach to the design of novel therapeutic agents for the treatment of type 2 diabetes.</text>
</comment>
<comment type="similarity">
    <text evidence="4">Belongs to the neurotoxin 10 (Hwtx-1) family. 44 (Jztx-4) subfamily.</text>
</comment>